<accession>P97888</accession>
<keyword id="KW-1185">Reference proteome</keyword>
<keyword id="KW-0677">Repeat</keyword>
<keyword id="KW-0853">WD repeat</keyword>
<reference key="1">
    <citation type="journal article" date="1995" name="Eur. J. Biochem.">
        <title>cDNA cloning of BR gamma, a novel brain-specific isoform of the B regulatory subunit of type-2A protein phosphatase.</title>
        <authorList>
            <person name="Akiyama N."/>
            <person name="Shima H."/>
            <person name="Hatano Y."/>
            <person name="Osawa Y."/>
            <person name="Sugimura T."/>
            <person name="Nagao M."/>
        </authorList>
    </citation>
    <scope>NUCLEOTIDE SEQUENCE [MRNA]</scope>
    <source>
        <strain>Sprague-Dawley</strain>
        <tissue>Brain</tissue>
    </source>
</reference>
<gene>
    <name type="primary">Ppp2r2c</name>
</gene>
<evidence type="ECO:0000250" key="1"/>
<evidence type="ECO:0000250" key="2">
    <source>
        <dbReference type="UniProtKB" id="Q9Y2T4"/>
    </source>
</evidence>
<evidence type="ECO:0000305" key="3"/>
<comment type="function">
    <text>The B regulatory subunit might modulate substrate selectivity and catalytic activity, and might also direct the localization of the catalytic enzyme to a particular subcellular compartment.</text>
</comment>
<comment type="subunit">
    <text evidence="1 2">PP2A consists of a common heterodimeric core enzyme, composed of a 36 kDa catalytic subunit (subunit C) and a 65 kDa constant regulatory subunit (PR65 or subunit A), that associates with a variety of regulatory subunits. Proteins that associate with the core dimer include three families of regulatory subunits B (the R2/B/PR55/B55, R3/B''/PR72/PR130/PR59 and R5/B'/B56 families), the 48 kDa variable regulatory subunit, viral proteins, and cell signaling molecules (By similarity). Interacts with IER5 (By similarity).</text>
</comment>
<comment type="tissue specificity">
    <text>Highly expressed in brain.</text>
</comment>
<comment type="similarity">
    <text evidence="3">Belongs to the phosphatase 2A regulatory subunit B family.</text>
</comment>
<sequence length="447" mass="51474">MGEDTDTRKINHSFLRDHSYVTEADVISTVEFNHTGELLATGDKGGRVVIFQREPESKNAPHSQGEYDVYSTFQSHEPEFDYLKSLEIEEKINKIKWLPQQNAAHSLLSTNDKTIKLWKITERDKRPEGYNLKDEEGKLKDLSTVTSLQVPVLKPMDLMVEVSPRRIFANGHTYHINSISVNSDCETYMSADDLRINLWHLAITDRSFNIVDIKPANMEDLTEVITASEFHPHHCNLFVYSSSKGSLRLCDMRAAALCDKHSKLFEEPEDPSNRSFFSEIISSVSDVKFSHSGRYMLTRDYLTVKVWDLNMEARPIETYQVHDYLRSKLCSLYESDCIFDKFECAWNGSDSVIMTGAYNNFFRMFDRNTKRDVTLEASRESSKPRAVLKPRRVCVGGKRRRDDISVDSLDFTKKILHTAWHPAENIIAIAATNNLYIFQDKVNSDMH</sequence>
<name>2ABG_RAT</name>
<proteinExistence type="evidence at transcript level"/>
<organism>
    <name type="scientific">Rattus norvegicus</name>
    <name type="common">Rat</name>
    <dbReference type="NCBI Taxonomy" id="10116"/>
    <lineage>
        <taxon>Eukaryota</taxon>
        <taxon>Metazoa</taxon>
        <taxon>Chordata</taxon>
        <taxon>Craniata</taxon>
        <taxon>Vertebrata</taxon>
        <taxon>Euteleostomi</taxon>
        <taxon>Mammalia</taxon>
        <taxon>Eutheria</taxon>
        <taxon>Euarchontoglires</taxon>
        <taxon>Glires</taxon>
        <taxon>Rodentia</taxon>
        <taxon>Myomorpha</taxon>
        <taxon>Muroidea</taxon>
        <taxon>Muridae</taxon>
        <taxon>Murinae</taxon>
        <taxon>Rattus</taxon>
    </lineage>
</organism>
<dbReference type="EMBL" id="D38261">
    <property type="protein sequence ID" value="BAA07413.1"/>
    <property type="molecule type" value="mRNA"/>
</dbReference>
<dbReference type="RefSeq" id="NP_476457.1">
    <property type="nucleotide sequence ID" value="NM_057116.2"/>
</dbReference>
<dbReference type="SMR" id="P97888"/>
<dbReference type="FunCoup" id="P97888">
    <property type="interactions" value="1973"/>
</dbReference>
<dbReference type="STRING" id="10116.ENSRNOP00000070068"/>
<dbReference type="PhosphoSitePlus" id="P97888"/>
<dbReference type="jPOST" id="P97888"/>
<dbReference type="PaxDb" id="10116-ENSRNOP00000007293"/>
<dbReference type="GeneID" id="117256"/>
<dbReference type="KEGG" id="rno:117256"/>
<dbReference type="AGR" id="RGD:620920"/>
<dbReference type="CTD" id="5522"/>
<dbReference type="RGD" id="620920">
    <property type="gene designation" value="Ppp2r2c"/>
</dbReference>
<dbReference type="eggNOG" id="KOG1354">
    <property type="taxonomic scope" value="Eukaryota"/>
</dbReference>
<dbReference type="InParanoid" id="P97888"/>
<dbReference type="OrthoDB" id="10332at9989"/>
<dbReference type="PhylomeDB" id="P97888"/>
<dbReference type="PRO" id="PR:P97888"/>
<dbReference type="Proteomes" id="UP000002494">
    <property type="component" value="Unplaced"/>
</dbReference>
<dbReference type="GO" id="GO:0005829">
    <property type="term" value="C:cytosol"/>
    <property type="evidence" value="ECO:0000318"/>
    <property type="project" value="GO_Central"/>
</dbReference>
<dbReference type="GO" id="GO:0000159">
    <property type="term" value="C:protein phosphatase type 2A complex"/>
    <property type="evidence" value="ECO:0000318"/>
    <property type="project" value="GO_Central"/>
</dbReference>
<dbReference type="GO" id="GO:0019888">
    <property type="term" value="F:protein phosphatase regulator activity"/>
    <property type="evidence" value="ECO:0000318"/>
    <property type="project" value="GO_Central"/>
</dbReference>
<dbReference type="FunFam" id="2.130.10.10:FF:000002">
    <property type="entry name" value="Serine/threonine-protein phosphatase 2A 55 kDa regulatory subunit B"/>
    <property type="match status" value="1"/>
</dbReference>
<dbReference type="Gene3D" id="2.130.10.10">
    <property type="entry name" value="YVTN repeat-like/Quinoprotein amine dehydrogenase"/>
    <property type="match status" value="1"/>
</dbReference>
<dbReference type="InterPro" id="IPR000009">
    <property type="entry name" value="PP2A_PR55"/>
</dbReference>
<dbReference type="InterPro" id="IPR018067">
    <property type="entry name" value="PP2A_PR55_CS"/>
</dbReference>
<dbReference type="InterPro" id="IPR015943">
    <property type="entry name" value="WD40/YVTN_repeat-like_dom_sf"/>
</dbReference>
<dbReference type="InterPro" id="IPR036322">
    <property type="entry name" value="WD40_repeat_dom_sf"/>
</dbReference>
<dbReference type="InterPro" id="IPR001680">
    <property type="entry name" value="WD40_rpt"/>
</dbReference>
<dbReference type="PANTHER" id="PTHR11871">
    <property type="entry name" value="PROTEIN PHOSPHATASE PP2A REGULATORY SUBUNIT B"/>
    <property type="match status" value="1"/>
</dbReference>
<dbReference type="PIRSF" id="PIRSF037309">
    <property type="entry name" value="PP2A_PR55"/>
    <property type="match status" value="1"/>
</dbReference>
<dbReference type="PRINTS" id="PR00600">
    <property type="entry name" value="PP2APR55"/>
</dbReference>
<dbReference type="SMART" id="SM00320">
    <property type="entry name" value="WD40"/>
    <property type="match status" value="6"/>
</dbReference>
<dbReference type="SUPFAM" id="SSF50978">
    <property type="entry name" value="WD40 repeat-like"/>
    <property type="match status" value="1"/>
</dbReference>
<dbReference type="PROSITE" id="PS01024">
    <property type="entry name" value="PR55_1"/>
    <property type="match status" value="1"/>
</dbReference>
<dbReference type="PROSITE" id="PS01025">
    <property type="entry name" value="PR55_2"/>
    <property type="match status" value="1"/>
</dbReference>
<feature type="chain" id="PRO_0000071432" description="Serine/threonine-protein phosphatase 2A 55 kDa regulatory subunit B gamma isoform">
    <location>
        <begin position="1"/>
        <end position="447"/>
    </location>
</feature>
<feature type="repeat" description="WD 1">
    <location>
        <begin position="22"/>
        <end position="61"/>
    </location>
</feature>
<feature type="repeat" description="WD 2">
    <location>
        <begin position="87"/>
        <end position="128"/>
    </location>
</feature>
<feature type="repeat" description="WD 3">
    <location>
        <begin position="171"/>
        <end position="209"/>
    </location>
</feature>
<feature type="repeat" description="WD 4">
    <location>
        <begin position="220"/>
        <end position="260"/>
    </location>
</feature>
<feature type="repeat" description="WD 5">
    <location>
        <begin position="279"/>
        <end position="317"/>
    </location>
</feature>
<feature type="repeat" description="WD 6">
    <location>
        <begin position="334"/>
        <end position="375"/>
    </location>
</feature>
<feature type="repeat" description="WD 7">
    <location>
        <begin position="410"/>
        <end position="446"/>
    </location>
</feature>
<protein>
    <recommendedName>
        <fullName>Serine/threonine-protein phosphatase 2A 55 kDa regulatory subunit B gamma isoform</fullName>
    </recommendedName>
    <alternativeName>
        <fullName>PP2A subunit B isoform B55-gamma</fullName>
    </alternativeName>
    <alternativeName>
        <fullName>PP2A subunit B isoform BRgamma</fullName>
    </alternativeName>
    <alternativeName>
        <fullName>PP2A subunit B isoform PR55-gamma</fullName>
    </alternativeName>
    <alternativeName>
        <fullName>PP2A subunit B isoform R2-gamma</fullName>
    </alternativeName>
    <alternativeName>
        <fullName>PP2A subunit B isoform gamma</fullName>
    </alternativeName>
</protein>